<organism>
    <name type="scientific">Staphylococcus aureus (strain N315)</name>
    <dbReference type="NCBI Taxonomy" id="158879"/>
    <lineage>
        <taxon>Bacteria</taxon>
        <taxon>Bacillati</taxon>
        <taxon>Bacillota</taxon>
        <taxon>Bacilli</taxon>
        <taxon>Bacillales</taxon>
        <taxon>Staphylococcaceae</taxon>
        <taxon>Staphylococcus</taxon>
    </lineage>
</organism>
<accession>P0A096</accession>
<accession>O08386</accession>
<sequence>MSEEVGAKRWYAVHTYSGYENKVKKNLEKRVESMNMTEQIFRVVIPEEEETQVKDGKAKTTVKKTFPGYVLVELIMTDESWYVVRNTPGVTGFVGSAGAGSKPNPLLPEEVRFILKQMGLKEKTIDVELEVGEQVRIKSGPFANQVGEVQEIETDKFKLTVLVDMFGRETPVEVEFDQIEKL</sequence>
<feature type="chain" id="PRO_0000113949" description="Transcription termination/antitermination protein NusG">
    <location>
        <begin position="1"/>
        <end position="182"/>
    </location>
</feature>
<feature type="domain" description="KOW" evidence="1">
    <location>
        <begin position="131"/>
        <end position="163"/>
    </location>
</feature>
<keyword id="KW-0804">Transcription</keyword>
<keyword id="KW-0889">Transcription antitermination</keyword>
<keyword id="KW-0805">Transcription regulation</keyword>
<keyword id="KW-0806">Transcription termination</keyword>
<evidence type="ECO:0000255" key="1">
    <source>
        <dbReference type="HAMAP-Rule" id="MF_00948"/>
    </source>
</evidence>
<gene>
    <name evidence="1" type="primary">nusG</name>
    <name type="ordered locus">SA0494</name>
</gene>
<name>NUSG_STAAN</name>
<protein>
    <recommendedName>
        <fullName evidence="1">Transcription termination/antitermination protein NusG</fullName>
    </recommendedName>
</protein>
<reference key="1">
    <citation type="journal article" date="2001" name="Lancet">
        <title>Whole genome sequencing of meticillin-resistant Staphylococcus aureus.</title>
        <authorList>
            <person name="Kuroda M."/>
            <person name="Ohta T."/>
            <person name="Uchiyama I."/>
            <person name="Baba T."/>
            <person name="Yuzawa H."/>
            <person name="Kobayashi I."/>
            <person name="Cui L."/>
            <person name="Oguchi A."/>
            <person name="Aoki K."/>
            <person name="Nagai Y."/>
            <person name="Lian J.-Q."/>
            <person name="Ito T."/>
            <person name="Kanamori M."/>
            <person name="Matsumaru H."/>
            <person name="Maruyama A."/>
            <person name="Murakami H."/>
            <person name="Hosoyama A."/>
            <person name="Mizutani-Ui Y."/>
            <person name="Takahashi N.K."/>
            <person name="Sawano T."/>
            <person name="Inoue R."/>
            <person name="Kaito C."/>
            <person name="Sekimizu K."/>
            <person name="Hirakawa H."/>
            <person name="Kuhara S."/>
            <person name="Goto S."/>
            <person name="Yabuzaki J."/>
            <person name="Kanehisa M."/>
            <person name="Yamashita A."/>
            <person name="Oshima K."/>
            <person name="Furuya K."/>
            <person name="Yoshino C."/>
            <person name="Shiba T."/>
            <person name="Hattori M."/>
            <person name="Ogasawara N."/>
            <person name="Hayashi H."/>
            <person name="Hiramatsu K."/>
        </authorList>
    </citation>
    <scope>NUCLEOTIDE SEQUENCE [LARGE SCALE GENOMIC DNA]</scope>
    <source>
        <strain>N315</strain>
    </source>
</reference>
<reference key="2">
    <citation type="submission" date="2007-10" db="UniProtKB">
        <title>Shotgun proteomic analysis of total and membrane protein extracts of S. aureus strain N315.</title>
        <authorList>
            <person name="Vaezzadeh A.R."/>
            <person name="Deshusses J."/>
            <person name="Lescuyer P."/>
            <person name="Hochstrasser D.F."/>
        </authorList>
    </citation>
    <scope>IDENTIFICATION BY MASS SPECTROMETRY [LARGE SCALE ANALYSIS]</scope>
    <source>
        <strain>N315</strain>
    </source>
</reference>
<proteinExistence type="evidence at protein level"/>
<comment type="function">
    <text evidence="1">Participates in transcription elongation, termination and antitermination.</text>
</comment>
<comment type="similarity">
    <text evidence="1">Belongs to the NusG family.</text>
</comment>
<dbReference type="EMBL" id="BA000018">
    <property type="protein sequence ID" value="BAB41724.1"/>
    <property type="molecule type" value="Genomic_DNA"/>
</dbReference>
<dbReference type="PIR" id="A89821">
    <property type="entry name" value="A89821"/>
</dbReference>
<dbReference type="RefSeq" id="WP_001288302.1">
    <property type="nucleotide sequence ID" value="NC_002745.2"/>
</dbReference>
<dbReference type="SMR" id="P0A096"/>
<dbReference type="EnsemblBacteria" id="BAB41724">
    <property type="protein sequence ID" value="BAB41724"/>
    <property type="gene ID" value="BAB41724"/>
</dbReference>
<dbReference type="KEGG" id="sau:SA0494"/>
<dbReference type="HOGENOM" id="CLU_067287_1_1_9"/>
<dbReference type="GO" id="GO:0005829">
    <property type="term" value="C:cytosol"/>
    <property type="evidence" value="ECO:0007669"/>
    <property type="project" value="TreeGrafter"/>
</dbReference>
<dbReference type="GO" id="GO:0006353">
    <property type="term" value="P:DNA-templated transcription termination"/>
    <property type="evidence" value="ECO:0007669"/>
    <property type="project" value="UniProtKB-UniRule"/>
</dbReference>
<dbReference type="GO" id="GO:0032784">
    <property type="term" value="P:regulation of DNA-templated transcription elongation"/>
    <property type="evidence" value="ECO:0007669"/>
    <property type="project" value="InterPro"/>
</dbReference>
<dbReference type="GO" id="GO:0031564">
    <property type="term" value="P:transcription antitermination"/>
    <property type="evidence" value="ECO:0007669"/>
    <property type="project" value="UniProtKB-UniRule"/>
</dbReference>
<dbReference type="GO" id="GO:0140673">
    <property type="term" value="P:transcription elongation-coupled chromatin remodeling"/>
    <property type="evidence" value="ECO:0007669"/>
    <property type="project" value="InterPro"/>
</dbReference>
<dbReference type="CDD" id="cd06091">
    <property type="entry name" value="KOW_NusG"/>
    <property type="match status" value="1"/>
</dbReference>
<dbReference type="CDD" id="cd09891">
    <property type="entry name" value="NGN_Bact_1"/>
    <property type="match status" value="1"/>
</dbReference>
<dbReference type="FunFam" id="2.30.30.30:FF:000002">
    <property type="entry name" value="Transcription termination/antitermination factor NusG"/>
    <property type="match status" value="1"/>
</dbReference>
<dbReference type="FunFam" id="3.30.70.940:FF:000002">
    <property type="entry name" value="Transcription termination/antitermination protein NusG"/>
    <property type="match status" value="1"/>
</dbReference>
<dbReference type="Gene3D" id="2.30.30.30">
    <property type="match status" value="1"/>
</dbReference>
<dbReference type="Gene3D" id="3.30.70.940">
    <property type="entry name" value="NusG, N-terminal domain"/>
    <property type="match status" value="1"/>
</dbReference>
<dbReference type="HAMAP" id="MF_00948">
    <property type="entry name" value="NusG"/>
    <property type="match status" value="1"/>
</dbReference>
<dbReference type="InterPro" id="IPR005824">
    <property type="entry name" value="KOW"/>
</dbReference>
<dbReference type="InterPro" id="IPR047050">
    <property type="entry name" value="NGN"/>
</dbReference>
<dbReference type="InterPro" id="IPR006645">
    <property type="entry name" value="NGN-like_dom"/>
</dbReference>
<dbReference type="InterPro" id="IPR036735">
    <property type="entry name" value="NGN_dom_sf"/>
</dbReference>
<dbReference type="InterPro" id="IPR043425">
    <property type="entry name" value="NusG-like"/>
</dbReference>
<dbReference type="InterPro" id="IPR014722">
    <property type="entry name" value="Rib_uL2_dom2"/>
</dbReference>
<dbReference type="InterPro" id="IPR001062">
    <property type="entry name" value="Transcrpt_antiterm_NusG"/>
</dbReference>
<dbReference type="InterPro" id="IPR015869">
    <property type="entry name" value="Transcrpt_antiterm_NusG_bac_CS"/>
</dbReference>
<dbReference type="InterPro" id="IPR008991">
    <property type="entry name" value="Translation_prot_SH3-like_sf"/>
</dbReference>
<dbReference type="NCBIfam" id="TIGR00922">
    <property type="entry name" value="nusG"/>
    <property type="match status" value="1"/>
</dbReference>
<dbReference type="PANTHER" id="PTHR30265">
    <property type="entry name" value="RHO-INTERACTING TRANSCRIPTION TERMINATION FACTOR NUSG"/>
    <property type="match status" value="1"/>
</dbReference>
<dbReference type="PANTHER" id="PTHR30265:SF2">
    <property type="entry name" value="TRANSCRIPTION TERMINATION_ANTITERMINATION PROTEIN NUSG"/>
    <property type="match status" value="1"/>
</dbReference>
<dbReference type="Pfam" id="PF00467">
    <property type="entry name" value="KOW"/>
    <property type="match status" value="1"/>
</dbReference>
<dbReference type="Pfam" id="PF02357">
    <property type="entry name" value="NusG"/>
    <property type="match status" value="1"/>
</dbReference>
<dbReference type="PRINTS" id="PR00338">
    <property type="entry name" value="NUSGTNSCPFCT"/>
</dbReference>
<dbReference type="SMART" id="SM00739">
    <property type="entry name" value="KOW"/>
    <property type="match status" value="1"/>
</dbReference>
<dbReference type="SMART" id="SM00738">
    <property type="entry name" value="NGN"/>
    <property type="match status" value="1"/>
</dbReference>
<dbReference type="SUPFAM" id="SSF82679">
    <property type="entry name" value="N-utilization substance G protein NusG, N-terminal domain"/>
    <property type="match status" value="1"/>
</dbReference>
<dbReference type="SUPFAM" id="SSF50104">
    <property type="entry name" value="Translation proteins SH3-like domain"/>
    <property type="match status" value="1"/>
</dbReference>
<dbReference type="PROSITE" id="PS01014">
    <property type="entry name" value="NUSG"/>
    <property type="match status" value="1"/>
</dbReference>